<dbReference type="EC" id="6.5.1.2" evidence="1"/>
<dbReference type="EMBL" id="CP001091">
    <property type="protein sequence ID" value="ACE62005.1"/>
    <property type="molecule type" value="Genomic_DNA"/>
</dbReference>
<dbReference type="RefSeq" id="WP_005617783.1">
    <property type="nucleotide sequence ID" value="NC_010939.1"/>
</dbReference>
<dbReference type="SMR" id="B3H275"/>
<dbReference type="KEGG" id="apa:APP7_1353"/>
<dbReference type="HOGENOM" id="CLU_007764_2_1_6"/>
<dbReference type="Proteomes" id="UP000001226">
    <property type="component" value="Chromosome"/>
</dbReference>
<dbReference type="GO" id="GO:0005829">
    <property type="term" value="C:cytosol"/>
    <property type="evidence" value="ECO:0007669"/>
    <property type="project" value="TreeGrafter"/>
</dbReference>
<dbReference type="GO" id="GO:0003677">
    <property type="term" value="F:DNA binding"/>
    <property type="evidence" value="ECO:0007669"/>
    <property type="project" value="InterPro"/>
</dbReference>
<dbReference type="GO" id="GO:0003911">
    <property type="term" value="F:DNA ligase (NAD+) activity"/>
    <property type="evidence" value="ECO:0007669"/>
    <property type="project" value="UniProtKB-UniRule"/>
</dbReference>
<dbReference type="GO" id="GO:0046872">
    <property type="term" value="F:metal ion binding"/>
    <property type="evidence" value="ECO:0007669"/>
    <property type="project" value="UniProtKB-KW"/>
</dbReference>
<dbReference type="GO" id="GO:0006281">
    <property type="term" value="P:DNA repair"/>
    <property type="evidence" value="ECO:0007669"/>
    <property type="project" value="UniProtKB-KW"/>
</dbReference>
<dbReference type="GO" id="GO:0006260">
    <property type="term" value="P:DNA replication"/>
    <property type="evidence" value="ECO:0007669"/>
    <property type="project" value="UniProtKB-KW"/>
</dbReference>
<dbReference type="CDD" id="cd17748">
    <property type="entry name" value="BRCT_DNA_ligase_like"/>
    <property type="match status" value="1"/>
</dbReference>
<dbReference type="CDD" id="cd00114">
    <property type="entry name" value="LIGANc"/>
    <property type="match status" value="1"/>
</dbReference>
<dbReference type="FunFam" id="1.10.150.20:FF:000006">
    <property type="entry name" value="DNA ligase"/>
    <property type="match status" value="1"/>
</dbReference>
<dbReference type="FunFam" id="1.10.150.20:FF:000007">
    <property type="entry name" value="DNA ligase"/>
    <property type="match status" value="1"/>
</dbReference>
<dbReference type="FunFam" id="1.10.287.610:FF:000002">
    <property type="entry name" value="DNA ligase"/>
    <property type="match status" value="1"/>
</dbReference>
<dbReference type="FunFam" id="2.40.50.140:FF:000012">
    <property type="entry name" value="DNA ligase"/>
    <property type="match status" value="1"/>
</dbReference>
<dbReference type="FunFam" id="3.30.470.30:FF:000001">
    <property type="entry name" value="DNA ligase"/>
    <property type="match status" value="1"/>
</dbReference>
<dbReference type="FunFam" id="6.20.10.30:FF:000001">
    <property type="entry name" value="DNA ligase"/>
    <property type="match status" value="1"/>
</dbReference>
<dbReference type="Gene3D" id="6.20.10.30">
    <property type="match status" value="1"/>
</dbReference>
<dbReference type="Gene3D" id="1.10.150.20">
    <property type="entry name" value="5' to 3' exonuclease, C-terminal subdomain"/>
    <property type="match status" value="2"/>
</dbReference>
<dbReference type="Gene3D" id="3.40.50.10190">
    <property type="entry name" value="BRCT domain"/>
    <property type="match status" value="1"/>
</dbReference>
<dbReference type="Gene3D" id="3.30.470.30">
    <property type="entry name" value="DNA ligase/mRNA capping enzyme"/>
    <property type="match status" value="1"/>
</dbReference>
<dbReference type="Gene3D" id="1.10.287.610">
    <property type="entry name" value="Helix hairpin bin"/>
    <property type="match status" value="1"/>
</dbReference>
<dbReference type="Gene3D" id="2.40.50.140">
    <property type="entry name" value="Nucleic acid-binding proteins"/>
    <property type="match status" value="1"/>
</dbReference>
<dbReference type="HAMAP" id="MF_01588">
    <property type="entry name" value="DNA_ligase_A"/>
    <property type="match status" value="1"/>
</dbReference>
<dbReference type="InterPro" id="IPR001357">
    <property type="entry name" value="BRCT_dom"/>
</dbReference>
<dbReference type="InterPro" id="IPR036420">
    <property type="entry name" value="BRCT_dom_sf"/>
</dbReference>
<dbReference type="InterPro" id="IPR041663">
    <property type="entry name" value="DisA/LigA_HHH"/>
</dbReference>
<dbReference type="InterPro" id="IPR001679">
    <property type="entry name" value="DNA_ligase"/>
</dbReference>
<dbReference type="InterPro" id="IPR018239">
    <property type="entry name" value="DNA_ligase_AS"/>
</dbReference>
<dbReference type="InterPro" id="IPR033136">
    <property type="entry name" value="DNA_ligase_CS"/>
</dbReference>
<dbReference type="InterPro" id="IPR013839">
    <property type="entry name" value="DNAligase_adenylation"/>
</dbReference>
<dbReference type="InterPro" id="IPR013840">
    <property type="entry name" value="DNAligase_N"/>
</dbReference>
<dbReference type="InterPro" id="IPR003583">
    <property type="entry name" value="Hlx-hairpin-Hlx_DNA-bd_motif"/>
</dbReference>
<dbReference type="InterPro" id="IPR012340">
    <property type="entry name" value="NA-bd_OB-fold"/>
</dbReference>
<dbReference type="InterPro" id="IPR004150">
    <property type="entry name" value="NAD_DNA_ligase_OB"/>
</dbReference>
<dbReference type="InterPro" id="IPR010994">
    <property type="entry name" value="RuvA_2-like"/>
</dbReference>
<dbReference type="InterPro" id="IPR004149">
    <property type="entry name" value="Znf_DNAligase_C4"/>
</dbReference>
<dbReference type="NCBIfam" id="TIGR00575">
    <property type="entry name" value="dnlj"/>
    <property type="match status" value="1"/>
</dbReference>
<dbReference type="NCBIfam" id="NF005932">
    <property type="entry name" value="PRK07956.1"/>
    <property type="match status" value="1"/>
</dbReference>
<dbReference type="PANTHER" id="PTHR23389">
    <property type="entry name" value="CHROMOSOME TRANSMISSION FIDELITY FACTOR 18"/>
    <property type="match status" value="1"/>
</dbReference>
<dbReference type="PANTHER" id="PTHR23389:SF9">
    <property type="entry name" value="DNA LIGASE"/>
    <property type="match status" value="1"/>
</dbReference>
<dbReference type="Pfam" id="PF00533">
    <property type="entry name" value="BRCT"/>
    <property type="match status" value="1"/>
</dbReference>
<dbReference type="Pfam" id="PF01653">
    <property type="entry name" value="DNA_ligase_aden"/>
    <property type="match status" value="1"/>
</dbReference>
<dbReference type="Pfam" id="PF03120">
    <property type="entry name" value="DNA_ligase_OB"/>
    <property type="match status" value="1"/>
</dbReference>
<dbReference type="Pfam" id="PF03119">
    <property type="entry name" value="DNA_ligase_ZBD"/>
    <property type="match status" value="1"/>
</dbReference>
<dbReference type="Pfam" id="PF12826">
    <property type="entry name" value="HHH_2"/>
    <property type="match status" value="1"/>
</dbReference>
<dbReference type="Pfam" id="PF14520">
    <property type="entry name" value="HHH_5"/>
    <property type="match status" value="1"/>
</dbReference>
<dbReference type="Pfam" id="PF22745">
    <property type="entry name" value="Nlig-Ia"/>
    <property type="match status" value="1"/>
</dbReference>
<dbReference type="PIRSF" id="PIRSF001604">
    <property type="entry name" value="LigA"/>
    <property type="match status" value="1"/>
</dbReference>
<dbReference type="SMART" id="SM00292">
    <property type="entry name" value="BRCT"/>
    <property type="match status" value="1"/>
</dbReference>
<dbReference type="SMART" id="SM00278">
    <property type="entry name" value="HhH1"/>
    <property type="match status" value="4"/>
</dbReference>
<dbReference type="SMART" id="SM00532">
    <property type="entry name" value="LIGANc"/>
    <property type="match status" value="1"/>
</dbReference>
<dbReference type="SUPFAM" id="SSF52113">
    <property type="entry name" value="BRCT domain"/>
    <property type="match status" value="1"/>
</dbReference>
<dbReference type="SUPFAM" id="SSF56091">
    <property type="entry name" value="DNA ligase/mRNA capping enzyme, catalytic domain"/>
    <property type="match status" value="1"/>
</dbReference>
<dbReference type="SUPFAM" id="SSF50249">
    <property type="entry name" value="Nucleic acid-binding proteins"/>
    <property type="match status" value="1"/>
</dbReference>
<dbReference type="SUPFAM" id="SSF47781">
    <property type="entry name" value="RuvA domain 2-like"/>
    <property type="match status" value="1"/>
</dbReference>
<dbReference type="PROSITE" id="PS50172">
    <property type="entry name" value="BRCT"/>
    <property type="match status" value="1"/>
</dbReference>
<dbReference type="PROSITE" id="PS01055">
    <property type="entry name" value="DNA_LIGASE_N1"/>
    <property type="match status" value="1"/>
</dbReference>
<dbReference type="PROSITE" id="PS01056">
    <property type="entry name" value="DNA_LIGASE_N2"/>
    <property type="match status" value="1"/>
</dbReference>
<sequence length="682" mass="75718">MPLLSQMQDQSGTTFAQLEALRQKLREYEYYYHVLDNPLVPDAEYDRLMNELKNLEWQHPEWITADSPTQRVGAKPLDGFAQVTHEIPMLSLDNAFSDEELDGFLRRMESYITEDPHTLAFCCEPKLDGLAVSILYVDGVLNQAATRGDGSTGEDITSNIRTIRNIPLKLNMDNPPARLEVRGEVFMPQKGFEALNERALEKGEKTFANPRNAAAGSLRQLDPKITRQRPLVLNAYGIGVYESDDELPVTHFERLQWLKSIGIPVNNEIRLATGREQLLAFYADIQAKRPTLGYDIDGAVLKVNDIGLQEQLGFISRSPRWAIAYKFPAQEEMTVLNDVEFQVGRTGAITPVAKLEPVFVAGVTVSNATLHNGDEIERLGIVIGDTVIIRRAGDVIPQIVGVVMERRPENAKKIEFPTACPVCESAVVRVEGEAVARCTGGLFCGAQRKEALKHFVSRKAMDIDGVGEKLIEQLMERELVHTPADLFKLEHTTLMRLERMGGKSAQNALNSIEKAKNTTLARFLFALGIRDVGEATAQNLANHFHNLDAIRAATFEQLQEVQDVGEVVANRIVRFWQEPHNVTVVEDLISQGIHWQDVVQVEIADNPLKGKSVVLTGTLTQLTRDQAKALLQSFGCKVSGSVSSKTDYLIAGEKAGSKLTKAQELGVKVLTEQEFIALTGEN</sequence>
<keyword id="KW-0227">DNA damage</keyword>
<keyword id="KW-0234">DNA repair</keyword>
<keyword id="KW-0235">DNA replication</keyword>
<keyword id="KW-0436">Ligase</keyword>
<keyword id="KW-0460">Magnesium</keyword>
<keyword id="KW-0464">Manganese</keyword>
<keyword id="KW-0479">Metal-binding</keyword>
<keyword id="KW-0520">NAD</keyword>
<keyword id="KW-0862">Zinc</keyword>
<feature type="chain" id="PRO_0000380282" description="DNA ligase">
    <location>
        <begin position="1"/>
        <end position="682"/>
    </location>
</feature>
<feature type="domain" description="BRCT" evidence="1">
    <location>
        <begin position="603"/>
        <end position="682"/>
    </location>
</feature>
<feature type="active site" description="N6-AMP-lysine intermediate" evidence="1">
    <location>
        <position position="126"/>
    </location>
</feature>
<feature type="binding site" evidence="1">
    <location>
        <begin position="42"/>
        <end position="46"/>
    </location>
    <ligand>
        <name>NAD(+)</name>
        <dbReference type="ChEBI" id="CHEBI:57540"/>
    </ligand>
</feature>
<feature type="binding site" evidence="1">
    <location>
        <begin position="91"/>
        <end position="92"/>
    </location>
    <ligand>
        <name>NAD(+)</name>
        <dbReference type="ChEBI" id="CHEBI:57540"/>
    </ligand>
</feature>
<feature type="binding site" evidence="1">
    <location>
        <position position="124"/>
    </location>
    <ligand>
        <name>NAD(+)</name>
        <dbReference type="ChEBI" id="CHEBI:57540"/>
    </ligand>
</feature>
<feature type="binding site" evidence="1">
    <location>
        <position position="147"/>
    </location>
    <ligand>
        <name>NAD(+)</name>
        <dbReference type="ChEBI" id="CHEBI:57540"/>
    </ligand>
</feature>
<feature type="binding site" evidence="1">
    <location>
        <position position="184"/>
    </location>
    <ligand>
        <name>NAD(+)</name>
        <dbReference type="ChEBI" id="CHEBI:57540"/>
    </ligand>
</feature>
<feature type="binding site" evidence="1">
    <location>
        <position position="302"/>
    </location>
    <ligand>
        <name>NAD(+)</name>
        <dbReference type="ChEBI" id="CHEBI:57540"/>
    </ligand>
</feature>
<feature type="binding site" evidence="1">
    <location>
        <position position="326"/>
    </location>
    <ligand>
        <name>NAD(+)</name>
        <dbReference type="ChEBI" id="CHEBI:57540"/>
    </ligand>
</feature>
<feature type="binding site" evidence="1">
    <location>
        <position position="420"/>
    </location>
    <ligand>
        <name>Zn(2+)</name>
        <dbReference type="ChEBI" id="CHEBI:29105"/>
    </ligand>
</feature>
<feature type="binding site" evidence="1">
    <location>
        <position position="423"/>
    </location>
    <ligand>
        <name>Zn(2+)</name>
        <dbReference type="ChEBI" id="CHEBI:29105"/>
    </ligand>
</feature>
<feature type="binding site" evidence="1">
    <location>
        <position position="438"/>
    </location>
    <ligand>
        <name>Zn(2+)</name>
        <dbReference type="ChEBI" id="CHEBI:29105"/>
    </ligand>
</feature>
<feature type="binding site" evidence="1">
    <location>
        <position position="444"/>
    </location>
    <ligand>
        <name>Zn(2+)</name>
        <dbReference type="ChEBI" id="CHEBI:29105"/>
    </ligand>
</feature>
<evidence type="ECO:0000255" key="1">
    <source>
        <dbReference type="HAMAP-Rule" id="MF_01588"/>
    </source>
</evidence>
<comment type="function">
    <text evidence="1">DNA ligase that catalyzes the formation of phosphodiester linkages between 5'-phosphoryl and 3'-hydroxyl groups in double-stranded DNA using NAD as a coenzyme and as the energy source for the reaction. It is essential for DNA replication and repair of damaged DNA.</text>
</comment>
<comment type="catalytic activity">
    <reaction evidence="1">
        <text>NAD(+) + (deoxyribonucleotide)n-3'-hydroxyl + 5'-phospho-(deoxyribonucleotide)m = (deoxyribonucleotide)n+m + AMP + beta-nicotinamide D-nucleotide.</text>
        <dbReference type="EC" id="6.5.1.2"/>
    </reaction>
</comment>
<comment type="cofactor">
    <cofactor evidence="1">
        <name>Mg(2+)</name>
        <dbReference type="ChEBI" id="CHEBI:18420"/>
    </cofactor>
    <cofactor evidence="1">
        <name>Mn(2+)</name>
        <dbReference type="ChEBI" id="CHEBI:29035"/>
    </cofactor>
</comment>
<comment type="similarity">
    <text evidence="1">Belongs to the NAD-dependent DNA ligase family. LigA subfamily.</text>
</comment>
<protein>
    <recommendedName>
        <fullName evidence="1">DNA ligase</fullName>
        <ecNumber evidence="1">6.5.1.2</ecNumber>
    </recommendedName>
    <alternativeName>
        <fullName evidence="1">Polydeoxyribonucleotide synthase [NAD(+)]</fullName>
    </alternativeName>
</protein>
<accession>B3H275</accession>
<proteinExistence type="inferred from homology"/>
<reference key="1">
    <citation type="submission" date="2008-06" db="EMBL/GenBank/DDBJ databases">
        <title>Genome and proteome analysis of A. pleuropneumoniae serotype 7.</title>
        <authorList>
            <person name="Linke B."/>
            <person name="Buettner F."/>
            <person name="Martinez-Arias R."/>
            <person name="Goesmann A."/>
            <person name="Baltes N."/>
            <person name="Tegetmeyer H."/>
            <person name="Singh M."/>
            <person name="Gerlach G.F."/>
        </authorList>
    </citation>
    <scope>NUCLEOTIDE SEQUENCE [LARGE SCALE GENOMIC DNA]</scope>
    <source>
        <strain>AP76</strain>
    </source>
</reference>
<name>DNLJ_ACTP7</name>
<organism>
    <name type="scientific">Actinobacillus pleuropneumoniae serotype 7 (strain AP76)</name>
    <dbReference type="NCBI Taxonomy" id="537457"/>
    <lineage>
        <taxon>Bacteria</taxon>
        <taxon>Pseudomonadati</taxon>
        <taxon>Pseudomonadota</taxon>
        <taxon>Gammaproteobacteria</taxon>
        <taxon>Pasteurellales</taxon>
        <taxon>Pasteurellaceae</taxon>
        <taxon>Actinobacillus</taxon>
    </lineage>
</organism>
<gene>
    <name evidence="1" type="primary">ligA</name>
    <name type="ordered locus">APP7_1353</name>
</gene>